<evidence type="ECO:0000255" key="1">
    <source>
        <dbReference type="HAMAP-Rule" id="MF_01271"/>
    </source>
</evidence>
<name>NAGK_SALSV</name>
<organism>
    <name type="scientific">Salmonella schwarzengrund (strain CVM19633)</name>
    <dbReference type="NCBI Taxonomy" id="439843"/>
    <lineage>
        <taxon>Bacteria</taxon>
        <taxon>Pseudomonadati</taxon>
        <taxon>Pseudomonadota</taxon>
        <taxon>Gammaproteobacteria</taxon>
        <taxon>Enterobacterales</taxon>
        <taxon>Enterobacteriaceae</taxon>
        <taxon>Salmonella</taxon>
    </lineage>
</organism>
<dbReference type="EC" id="2.7.1.59" evidence="1"/>
<dbReference type="EMBL" id="CP001127">
    <property type="protein sequence ID" value="ACF91290.1"/>
    <property type="molecule type" value="Genomic_DNA"/>
</dbReference>
<dbReference type="RefSeq" id="WP_000291330.1">
    <property type="nucleotide sequence ID" value="NC_011094.1"/>
</dbReference>
<dbReference type="SMR" id="B4TTJ1"/>
<dbReference type="KEGG" id="sew:SeSA_A1297"/>
<dbReference type="HOGENOM" id="CLU_036604_0_3_6"/>
<dbReference type="UniPathway" id="UPA00544"/>
<dbReference type="Proteomes" id="UP000001865">
    <property type="component" value="Chromosome"/>
</dbReference>
<dbReference type="GO" id="GO:0005524">
    <property type="term" value="F:ATP binding"/>
    <property type="evidence" value="ECO:0007669"/>
    <property type="project" value="UniProtKB-UniRule"/>
</dbReference>
<dbReference type="GO" id="GO:0045127">
    <property type="term" value="F:N-acetylglucosamine kinase activity"/>
    <property type="evidence" value="ECO:0007669"/>
    <property type="project" value="UniProtKB-UniRule"/>
</dbReference>
<dbReference type="GO" id="GO:0008270">
    <property type="term" value="F:zinc ion binding"/>
    <property type="evidence" value="ECO:0007669"/>
    <property type="project" value="UniProtKB-UniRule"/>
</dbReference>
<dbReference type="GO" id="GO:0006044">
    <property type="term" value="P:N-acetylglucosamine metabolic process"/>
    <property type="evidence" value="ECO:0007669"/>
    <property type="project" value="UniProtKB-UniRule"/>
</dbReference>
<dbReference type="GO" id="GO:0009254">
    <property type="term" value="P:peptidoglycan turnover"/>
    <property type="evidence" value="ECO:0007669"/>
    <property type="project" value="UniProtKB-UniRule"/>
</dbReference>
<dbReference type="CDD" id="cd24057">
    <property type="entry name" value="ASKHA_NBD_ROK_NAGK"/>
    <property type="match status" value="1"/>
</dbReference>
<dbReference type="FunFam" id="3.30.420.40:FF:000049">
    <property type="entry name" value="N-acetyl-D-glucosamine kinase"/>
    <property type="match status" value="1"/>
</dbReference>
<dbReference type="FunFam" id="3.30.420.40:FF:000051">
    <property type="entry name" value="N-acetyl-D-glucosamine kinase"/>
    <property type="match status" value="1"/>
</dbReference>
<dbReference type="Gene3D" id="3.30.420.40">
    <property type="match status" value="2"/>
</dbReference>
<dbReference type="HAMAP" id="MF_01271">
    <property type="entry name" value="GlcNAc_kinase"/>
    <property type="match status" value="1"/>
</dbReference>
<dbReference type="InterPro" id="IPR043129">
    <property type="entry name" value="ATPase_NBD"/>
</dbReference>
<dbReference type="InterPro" id="IPR023505">
    <property type="entry name" value="N-acetyl-D-glucosamine_kinase"/>
</dbReference>
<dbReference type="InterPro" id="IPR000600">
    <property type="entry name" value="ROK"/>
</dbReference>
<dbReference type="InterPro" id="IPR049874">
    <property type="entry name" value="ROK_cs"/>
</dbReference>
<dbReference type="NCBIfam" id="NF009835">
    <property type="entry name" value="PRK13310.1"/>
    <property type="match status" value="1"/>
</dbReference>
<dbReference type="PANTHER" id="PTHR18964:SF162">
    <property type="entry name" value="N-ACETYL-D-GLUCOSAMINE KINASE"/>
    <property type="match status" value="1"/>
</dbReference>
<dbReference type="PANTHER" id="PTHR18964">
    <property type="entry name" value="ROK (REPRESSOR, ORF, KINASE) FAMILY"/>
    <property type="match status" value="1"/>
</dbReference>
<dbReference type="Pfam" id="PF00480">
    <property type="entry name" value="ROK"/>
    <property type="match status" value="1"/>
</dbReference>
<dbReference type="SUPFAM" id="SSF53067">
    <property type="entry name" value="Actin-like ATPase domain"/>
    <property type="match status" value="1"/>
</dbReference>
<dbReference type="PROSITE" id="PS01125">
    <property type="entry name" value="ROK"/>
    <property type="match status" value="1"/>
</dbReference>
<gene>
    <name evidence="1" type="primary">nagK</name>
    <name type="ordered locus">SeSA_A1297</name>
</gene>
<keyword id="KW-0067">ATP-binding</keyword>
<keyword id="KW-0119">Carbohydrate metabolism</keyword>
<keyword id="KW-0418">Kinase</keyword>
<keyword id="KW-0479">Metal-binding</keyword>
<keyword id="KW-0547">Nucleotide-binding</keyword>
<keyword id="KW-0808">Transferase</keyword>
<keyword id="KW-0862">Zinc</keyword>
<sequence length="303" mass="33002">MYYGFDIGGTKIALGVFDSTRRLQWEKRVPTPHTSYSAFLDAVCELVAEADQRFGVKGSVGIGIPGMPETEDGTLYAANVPAASGKPLRADLSARLDRDVRLDNDANCFALSEAWDDEFTQYPLVMGLILGTGVGGGLVLNGKPITGQSYITGEFGHMRLPVDALTLMGFDFPLRRCGCGQMGCIENYLSGRGFAWLYQHYYDQSLQAPEIIALWEQGDEQAHAHVERYLDLLAVCLGNILTIVDPDLLVIGGGLSNFTAITTQLAERLPRHLLPVARAPRIERARHGDAGGMRGAAFLHLTD</sequence>
<accession>B4TTJ1</accession>
<comment type="function">
    <text evidence="1">Catalyzes the phosphorylation of N-acetyl-D-glucosamine (GlcNAc) derived from cell-wall degradation, yielding GlcNAc-6-P.</text>
</comment>
<comment type="catalytic activity">
    <reaction evidence="1">
        <text>N-acetyl-D-glucosamine + ATP = N-acetyl-D-glucosamine 6-phosphate + ADP + H(+)</text>
        <dbReference type="Rhea" id="RHEA:17417"/>
        <dbReference type="ChEBI" id="CHEBI:15378"/>
        <dbReference type="ChEBI" id="CHEBI:30616"/>
        <dbReference type="ChEBI" id="CHEBI:57513"/>
        <dbReference type="ChEBI" id="CHEBI:456216"/>
        <dbReference type="ChEBI" id="CHEBI:506227"/>
        <dbReference type="EC" id="2.7.1.59"/>
    </reaction>
</comment>
<comment type="pathway">
    <text evidence="1">Cell wall biogenesis; peptidoglycan recycling.</text>
</comment>
<comment type="similarity">
    <text evidence="1">Belongs to the ROK (NagC/XylR) family. NagK subfamily.</text>
</comment>
<feature type="chain" id="PRO_1000140197" description="N-acetyl-D-glucosamine kinase">
    <location>
        <begin position="1"/>
        <end position="303"/>
    </location>
</feature>
<feature type="binding site" evidence="1">
    <location>
        <begin position="4"/>
        <end position="11"/>
    </location>
    <ligand>
        <name>ATP</name>
        <dbReference type="ChEBI" id="CHEBI:30616"/>
    </ligand>
</feature>
<feature type="binding site" evidence="1">
    <location>
        <begin position="133"/>
        <end position="140"/>
    </location>
    <ligand>
        <name>ATP</name>
        <dbReference type="ChEBI" id="CHEBI:30616"/>
    </ligand>
</feature>
<feature type="binding site" evidence="1">
    <location>
        <position position="157"/>
    </location>
    <ligand>
        <name>Zn(2+)</name>
        <dbReference type="ChEBI" id="CHEBI:29105"/>
    </ligand>
</feature>
<feature type="binding site" evidence="1">
    <location>
        <position position="177"/>
    </location>
    <ligand>
        <name>Zn(2+)</name>
        <dbReference type="ChEBI" id="CHEBI:29105"/>
    </ligand>
</feature>
<feature type="binding site" evidence="1">
    <location>
        <position position="179"/>
    </location>
    <ligand>
        <name>Zn(2+)</name>
        <dbReference type="ChEBI" id="CHEBI:29105"/>
    </ligand>
</feature>
<feature type="binding site" evidence="1">
    <location>
        <position position="184"/>
    </location>
    <ligand>
        <name>Zn(2+)</name>
        <dbReference type="ChEBI" id="CHEBI:29105"/>
    </ligand>
</feature>
<reference key="1">
    <citation type="journal article" date="2011" name="J. Bacteriol.">
        <title>Comparative genomics of 28 Salmonella enterica isolates: evidence for CRISPR-mediated adaptive sublineage evolution.</title>
        <authorList>
            <person name="Fricke W.F."/>
            <person name="Mammel M.K."/>
            <person name="McDermott P.F."/>
            <person name="Tartera C."/>
            <person name="White D.G."/>
            <person name="Leclerc J.E."/>
            <person name="Ravel J."/>
            <person name="Cebula T.A."/>
        </authorList>
    </citation>
    <scope>NUCLEOTIDE SEQUENCE [LARGE SCALE GENOMIC DNA]</scope>
    <source>
        <strain>CVM19633</strain>
    </source>
</reference>
<proteinExistence type="inferred from homology"/>
<protein>
    <recommendedName>
        <fullName evidence="1">N-acetyl-D-glucosamine kinase</fullName>
        <ecNumber evidence="1">2.7.1.59</ecNumber>
    </recommendedName>
    <alternativeName>
        <fullName evidence="1">GlcNAc kinase</fullName>
    </alternativeName>
</protein>